<organism>
    <name type="scientific">Arabidopsis thaliana</name>
    <name type="common">Mouse-ear cress</name>
    <dbReference type="NCBI Taxonomy" id="3702"/>
    <lineage>
        <taxon>Eukaryota</taxon>
        <taxon>Viridiplantae</taxon>
        <taxon>Streptophyta</taxon>
        <taxon>Embryophyta</taxon>
        <taxon>Tracheophyta</taxon>
        <taxon>Spermatophyta</taxon>
        <taxon>Magnoliopsida</taxon>
        <taxon>eudicotyledons</taxon>
        <taxon>Gunneridae</taxon>
        <taxon>Pentapetalae</taxon>
        <taxon>rosids</taxon>
        <taxon>malvids</taxon>
        <taxon>Brassicales</taxon>
        <taxon>Brassicaceae</taxon>
        <taxon>Camelineae</taxon>
        <taxon>Arabidopsis</taxon>
    </lineage>
</organism>
<feature type="transit peptide" description="Mitochondrion" evidence="2">
    <location>
        <begin position="1"/>
        <end position="43"/>
    </location>
</feature>
<feature type="chain" id="PRO_0000417610" description="Gamma carbonic anhydrase 1, mitochondrial">
    <location>
        <begin position="44"/>
        <end position="275"/>
    </location>
</feature>
<feature type="region of interest" description="Disordered" evidence="3">
    <location>
        <begin position="256"/>
        <end position="275"/>
    </location>
</feature>
<feature type="compositionally biased region" description="Basic and acidic residues" evidence="3">
    <location>
        <begin position="264"/>
        <end position="275"/>
    </location>
</feature>
<feature type="binding site" evidence="1">
    <location>
        <begin position="86"/>
        <end position="88"/>
    </location>
    <ligand>
        <name>substrate</name>
    </ligand>
</feature>
<feature type="binding site" evidence="1">
    <location>
        <begin position="101"/>
        <end position="102"/>
    </location>
    <ligand>
        <name>substrate</name>
    </ligand>
</feature>
<feature type="binding site" evidence="1">
    <location>
        <position position="107"/>
    </location>
    <ligand>
        <name>Zn(2+)</name>
        <dbReference type="ChEBI" id="CHEBI:29105"/>
    </ligand>
</feature>
<feature type="binding site" evidence="1">
    <location>
        <position position="130"/>
    </location>
    <ligand>
        <name>Zn(2+)</name>
        <dbReference type="ChEBI" id="CHEBI:29105"/>
    </ligand>
</feature>
<feature type="binding site" evidence="1">
    <location>
        <position position="135"/>
    </location>
    <ligand>
        <name>Zn(2+)</name>
        <dbReference type="ChEBI" id="CHEBI:29105"/>
    </ligand>
</feature>
<feature type="binding site" evidence="1">
    <location>
        <position position="209"/>
    </location>
    <ligand>
        <name>substrate</name>
    </ligand>
</feature>
<feature type="sequence conflict" description="In Ref. 3; BAD44607." evidence="5" ref="3">
    <original>R</original>
    <variation>L</variation>
    <location>
        <position position="16"/>
    </location>
</feature>
<feature type="sequence conflict" description="In Ref. 3; BAD44607." evidence="5" ref="3">
    <original>L</original>
    <variation>Q</variation>
    <location>
        <position position="45"/>
    </location>
</feature>
<feature type="sequence conflict" description="In Ref. 4; AAM61583." evidence="5" ref="4">
    <original>E</original>
    <variation>D</variation>
    <location>
        <position position="58"/>
    </location>
</feature>
<feature type="sequence conflict" description="In Ref. 3; BAD43151." evidence="5" ref="3">
    <original>K</original>
    <variation>R</variation>
    <location>
        <position position="238"/>
    </location>
</feature>
<feature type="sequence conflict" description="In Ref. 4; AAM61583." evidence="5" ref="4">
    <original>V</original>
    <variation>L</variation>
    <location>
        <position position="274"/>
    </location>
</feature>
<feature type="helix" evidence="6">
    <location>
        <begin position="3"/>
        <end position="29"/>
    </location>
</feature>
<feature type="helix" evidence="6">
    <location>
        <begin position="34"/>
        <end position="36"/>
    </location>
</feature>
<feature type="strand" evidence="6">
    <location>
        <begin position="44"/>
        <end position="46"/>
    </location>
</feature>
<feature type="strand" evidence="6">
    <location>
        <begin position="66"/>
        <end position="73"/>
    </location>
</feature>
<feature type="strand" evidence="6">
    <location>
        <begin position="84"/>
        <end position="94"/>
    </location>
</feature>
<feature type="strand" evidence="6">
    <location>
        <begin position="105"/>
        <end position="107"/>
    </location>
</feature>
<feature type="strand" evidence="6">
    <location>
        <begin position="120"/>
        <end position="122"/>
    </location>
</feature>
<feature type="strand" evidence="6">
    <location>
        <begin position="133"/>
        <end position="136"/>
    </location>
</feature>
<feature type="strand" evidence="6">
    <location>
        <begin position="179"/>
        <end position="182"/>
    </location>
</feature>
<feature type="turn" evidence="6">
    <location>
        <begin position="183"/>
        <end position="186"/>
    </location>
</feature>
<feature type="strand" evidence="6">
    <location>
        <begin position="187"/>
        <end position="191"/>
    </location>
</feature>
<feature type="helix" evidence="6">
    <location>
        <begin position="194"/>
        <end position="219"/>
    </location>
</feature>
<feature type="helix" evidence="6">
    <location>
        <begin position="224"/>
        <end position="231"/>
    </location>
</feature>
<comment type="function">
    <text evidence="1">Enzyme involved in the catabolism of H(2)CO(3) but that does not mediates the reversible hydration of carbon dioxide. Mediates complex I assembly in mitochondria and respiration (By similarity).</text>
</comment>
<comment type="cofactor">
    <cofactor evidence="1">
        <name>Zn(2+)</name>
        <dbReference type="ChEBI" id="CHEBI:29105"/>
    </cofactor>
</comment>
<comment type="subunit">
    <text evidence="5">Homotrimer. Component of the mitochondrial oxidoreductase respiratory chain complex I; element of the extra matrix-exposed domain, which is attached to the membrane arm of this complex (Probable).</text>
</comment>
<comment type="subcellular location">
    <subcellularLocation>
        <location evidence="4">Mitochondrion membrane</location>
        <topology evidence="4">Peripheral membrane protein</topology>
        <orientation evidence="4">Matrix side</orientation>
    </subcellularLocation>
    <text evidence="1">Probably integral to the membrane.</text>
</comment>
<comment type="alternative products">
    <event type="alternative splicing"/>
    <isoform>
        <id>Q9FWR5-1</id>
        <name>1</name>
        <sequence type="displayed"/>
    </isoform>
    <text>A number of isoforms are produced. According to EST sequences.</text>
</comment>
<comment type="similarity">
    <text evidence="5">Belongs to the gamma-class carbonic anhydrase family.</text>
</comment>
<comment type="sequence caution" evidence="5">
    <conflict type="erroneous gene model prediction">
        <sequence resource="EMBL-CDS" id="AAF79435"/>
    </conflict>
</comment>
<evidence type="ECO:0000250" key="1"/>
<evidence type="ECO:0000255" key="2"/>
<evidence type="ECO:0000256" key="3">
    <source>
        <dbReference type="SAM" id="MobiDB-lite"/>
    </source>
</evidence>
<evidence type="ECO:0000269" key="4">
    <source>
    </source>
</evidence>
<evidence type="ECO:0000305" key="5"/>
<evidence type="ECO:0007829" key="6">
    <source>
        <dbReference type="PDB" id="8BEF"/>
    </source>
</evidence>
<gene>
    <name type="primary">GAMMACA1</name>
    <name type="ordered locus">At1g19580</name>
    <name type="ORF">F14P1.8</name>
    <name type="ORF">F18O14.34</name>
</gene>
<reference key="1">
    <citation type="journal article" date="2000" name="Nature">
        <title>Sequence and analysis of chromosome 1 of the plant Arabidopsis thaliana.</title>
        <authorList>
            <person name="Theologis A."/>
            <person name="Ecker J.R."/>
            <person name="Palm C.J."/>
            <person name="Federspiel N.A."/>
            <person name="Kaul S."/>
            <person name="White O."/>
            <person name="Alonso J."/>
            <person name="Altafi H."/>
            <person name="Araujo R."/>
            <person name="Bowman C.L."/>
            <person name="Brooks S.Y."/>
            <person name="Buehler E."/>
            <person name="Chan A."/>
            <person name="Chao Q."/>
            <person name="Chen H."/>
            <person name="Cheuk R.F."/>
            <person name="Chin C.W."/>
            <person name="Chung M.K."/>
            <person name="Conn L."/>
            <person name="Conway A.B."/>
            <person name="Conway A.R."/>
            <person name="Creasy T.H."/>
            <person name="Dewar K."/>
            <person name="Dunn P."/>
            <person name="Etgu P."/>
            <person name="Feldblyum T.V."/>
            <person name="Feng J.-D."/>
            <person name="Fong B."/>
            <person name="Fujii C.Y."/>
            <person name="Gill J.E."/>
            <person name="Goldsmith A.D."/>
            <person name="Haas B."/>
            <person name="Hansen N.F."/>
            <person name="Hughes B."/>
            <person name="Huizar L."/>
            <person name="Hunter J.L."/>
            <person name="Jenkins J."/>
            <person name="Johnson-Hopson C."/>
            <person name="Khan S."/>
            <person name="Khaykin E."/>
            <person name="Kim C.J."/>
            <person name="Koo H.L."/>
            <person name="Kremenetskaia I."/>
            <person name="Kurtz D.B."/>
            <person name="Kwan A."/>
            <person name="Lam B."/>
            <person name="Langin-Hooper S."/>
            <person name="Lee A."/>
            <person name="Lee J.M."/>
            <person name="Lenz C.A."/>
            <person name="Li J.H."/>
            <person name="Li Y.-P."/>
            <person name="Lin X."/>
            <person name="Liu S.X."/>
            <person name="Liu Z.A."/>
            <person name="Luros J.S."/>
            <person name="Maiti R."/>
            <person name="Marziali A."/>
            <person name="Militscher J."/>
            <person name="Miranda M."/>
            <person name="Nguyen M."/>
            <person name="Nierman W.C."/>
            <person name="Osborne B.I."/>
            <person name="Pai G."/>
            <person name="Peterson J."/>
            <person name="Pham P.K."/>
            <person name="Rizzo M."/>
            <person name="Rooney T."/>
            <person name="Rowley D."/>
            <person name="Sakano H."/>
            <person name="Salzberg S.L."/>
            <person name="Schwartz J.R."/>
            <person name="Shinn P."/>
            <person name="Southwick A.M."/>
            <person name="Sun H."/>
            <person name="Tallon L.J."/>
            <person name="Tambunga G."/>
            <person name="Toriumi M.J."/>
            <person name="Town C.D."/>
            <person name="Utterback T."/>
            <person name="Van Aken S."/>
            <person name="Vaysberg M."/>
            <person name="Vysotskaia V.S."/>
            <person name="Walker M."/>
            <person name="Wu D."/>
            <person name="Yu G."/>
            <person name="Fraser C.M."/>
            <person name="Venter J.C."/>
            <person name="Davis R.W."/>
        </authorList>
    </citation>
    <scope>NUCLEOTIDE SEQUENCE [LARGE SCALE GENOMIC DNA]</scope>
    <source>
        <strain>cv. Columbia</strain>
    </source>
</reference>
<reference key="2">
    <citation type="journal article" date="2017" name="Plant J.">
        <title>Araport11: a complete reannotation of the Arabidopsis thaliana reference genome.</title>
        <authorList>
            <person name="Cheng C.Y."/>
            <person name="Krishnakumar V."/>
            <person name="Chan A.P."/>
            <person name="Thibaud-Nissen F."/>
            <person name="Schobel S."/>
            <person name="Town C.D."/>
        </authorList>
    </citation>
    <scope>GENOME REANNOTATION</scope>
    <source>
        <strain>cv. Columbia</strain>
    </source>
</reference>
<reference key="3">
    <citation type="submission" date="2004-09" db="EMBL/GenBank/DDBJ databases">
        <title>Large-scale analysis of RIKEN Arabidopsis full-length (RAFL) cDNAs.</title>
        <authorList>
            <person name="Totoki Y."/>
            <person name="Seki M."/>
            <person name="Ishida J."/>
            <person name="Nakajima M."/>
            <person name="Enju A."/>
            <person name="Kamiya A."/>
            <person name="Narusaka M."/>
            <person name="Shin-i T."/>
            <person name="Nakagawa M."/>
            <person name="Sakamoto N."/>
            <person name="Oishi K."/>
            <person name="Kohara Y."/>
            <person name="Kobayashi M."/>
            <person name="Toyoda A."/>
            <person name="Sakaki Y."/>
            <person name="Sakurai T."/>
            <person name="Iida K."/>
            <person name="Akiyama K."/>
            <person name="Satou M."/>
            <person name="Toyoda T."/>
            <person name="Konagaya A."/>
            <person name="Carninci P."/>
            <person name="Kawai J."/>
            <person name="Hayashizaki Y."/>
            <person name="Shinozaki K."/>
        </authorList>
    </citation>
    <scope>NUCLEOTIDE SEQUENCE [LARGE SCALE MRNA]</scope>
    <source>
        <strain>cv. Columbia</strain>
    </source>
</reference>
<reference key="4">
    <citation type="submission" date="2002-03" db="EMBL/GenBank/DDBJ databases">
        <title>Full-length cDNA from Arabidopsis thaliana.</title>
        <authorList>
            <person name="Brover V.V."/>
            <person name="Troukhan M.E."/>
            <person name="Alexandrov N.A."/>
            <person name="Lu Y.-P."/>
            <person name="Flavell R.B."/>
            <person name="Feldmann K.A."/>
        </authorList>
    </citation>
    <scope>NUCLEOTIDE SEQUENCE [LARGE SCALE MRNA]</scope>
</reference>
<reference key="5">
    <citation type="journal article" date="2004" name="Plant Mol. Biol.">
        <title>Gamma carbonic anhydrases in plant mitochondria.</title>
        <authorList>
            <person name="Parisi G."/>
            <person name="Perales M."/>
            <person name="Fornasari M.S."/>
            <person name="Colaneri A."/>
            <person name="Gonzalez-Schain N."/>
            <person name="Gomez-Casati D."/>
            <person name="Zimmermann S."/>
            <person name="Brennicke A."/>
            <person name="Araya A."/>
            <person name="Ferry J.G."/>
            <person name="Echave J."/>
            <person name="Zabaleta E."/>
        </authorList>
    </citation>
    <scope>SUBCELLULAR LOCATION</scope>
    <scope>GENE FAMILY</scope>
    <scope>NOMENCLATURE</scope>
</reference>
<reference key="6">
    <citation type="journal article" date="2006" name="J. Biol. Chem.">
        <title>Carbonic anhydrase subunits form a matrix-exposed domain attached to the membrane arm of mitochondrial complex I in plants.</title>
        <authorList>
            <person name="Sunderhaus S."/>
            <person name="Dudkina N.V."/>
            <person name="Jaensch L."/>
            <person name="Klodmann J."/>
            <person name="Heinemeyer J."/>
            <person name="Perales M."/>
            <person name="Zabaleta E."/>
            <person name="Boekema E.J."/>
            <person name="Braun H.-P."/>
        </authorList>
    </citation>
    <scope>IDENTIFICATION BY MASS SPECTROMETRY</scope>
</reference>
<proteinExistence type="evidence at protein level"/>
<name>GCA1_ARATH</name>
<sequence length="275" mass="29971">MGTLGRAFYSVGFWIRETGQALDRLGCRLQGKNYFREQLSRHRTLMNVFDKAPIVDKEAFVAPSASVIGDVHIGRGSSIWYGCVLRGDVNTVSVGSGTNIQDNSLVHVAKSNLSGKVHPTIIGDNVTIGHSAVLHGCTVEDETFIGMGATLLDGVVVEKHGMVAAGALVRQNTRIPSGEVWGGNPARFLRKLTDEEIAFISQSATNYSNLAQAHAAENAKPLNVIEFEKVLRKKHALKDEEYDSMLGIVRETPPELNLPNNILPDKETKRPSNVN</sequence>
<protein>
    <recommendedName>
        <fullName>Gamma carbonic anhydrase 1, mitochondrial</fullName>
        <shortName>AtCA1</shortName>
        <shortName>GAMMA CA1</shortName>
        <ecNumber>4.2.1.-</ecNumber>
    </recommendedName>
</protein>
<dbReference type="EC" id="4.2.1.-"/>
<dbReference type="EMBL" id="AC024609">
    <property type="protein sequence ID" value="AAF98404.1"/>
    <property type="molecule type" value="Genomic_DNA"/>
</dbReference>
<dbReference type="EMBL" id="AC025808">
    <property type="protein sequence ID" value="AAF79435.1"/>
    <property type="status" value="ALT_SEQ"/>
    <property type="molecule type" value="Genomic_DNA"/>
</dbReference>
<dbReference type="EMBL" id="CP002684">
    <property type="protein sequence ID" value="AEE29870.1"/>
    <property type="molecule type" value="Genomic_DNA"/>
</dbReference>
<dbReference type="EMBL" id="AK175388">
    <property type="protein sequence ID" value="BAD43151.1"/>
    <property type="molecule type" value="mRNA"/>
</dbReference>
<dbReference type="EMBL" id="AK176844">
    <property type="protein sequence ID" value="BAD44607.1"/>
    <property type="molecule type" value="mRNA"/>
</dbReference>
<dbReference type="EMBL" id="AK176887">
    <property type="protein sequence ID" value="BAD44650.1"/>
    <property type="molecule type" value="mRNA"/>
</dbReference>
<dbReference type="EMBL" id="AK229264">
    <property type="protein sequence ID" value="BAF01128.1"/>
    <property type="molecule type" value="mRNA"/>
</dbReference>
<dbReference type="EMBL" id="AY085025">
    <property type="protein sequence ID" value="AAM61583.1"/>
    <property type="molecule type" value="mRNA"/>
</dbReference>
<dbReference type="PIR" id="E86328">
    <property type="entry name" value="E86328"/>
</dbReference>
<dbReference type="RefSeq" id="NP_564091.1">
    <molecule id="Q9FWR5-1"/>
    <property type="nucleotide sequence ID" value="NM_101815.4"/>
</dbReference>
<dbReference type="PDB" id="7A23">
    <property type="method" value="EM"/>
    <property type="resolution" value="3.70 A"/>
    <property type="chains" value="p/q=1-275"/>
</dbReference>
<dbReference type="PDB" id="7A24">
    <property type="method" value="EM"/>
    <property type="resolution" value="3.80 A"/>
    <property type="chains" value="p/q=1-275"/>
</dbReference>
<dbReference type="PDB" id="7AQQ">
    <property type="method" value="EM"/>
    <property type="resolution" value="3.06 A"/>
    <property type="chains" value="z=1-275"/>
</dbReference>
<dbReference type="PDB" id="7AR7">
    <property type="method" value="EM"/>
    <property type="resolution" value="3.72 A"/>
    <property type="chains" value="z=2-234"/>
</dbReference>
<dbReference type="PDB" id="7AR8">
    <property type="method" value="EM"/>
    <property type="resolution" value="3.53 A"/>
    <property type="chains" value="z=1-275"/>
</dbReference>
<dbReference type="PDB" id="7ARB">
    <property type="method" value="EM"/>
    <property type="resolution" value="3.41 A"/>
    <property type="chains" value="z=1-275"/>
</dbReference>
<dbReference type="PDB" id="8BEF">
    <property type="method" value="EM"/>
    <property type="resolution" value="2.13 A"/>
    <property type="chains" value="z=1-275"/>
</dbReference>
<dbReference type="PDB" id="8BPX">
    <property type="method" value="EM"/>
    <property type="resolution" value="2.09 A"/>
    <property type="chains" value="z=1-275"/>
</dbReference>
<dbReference type="PDB" id="8BQ5">
    <property type="method" value="EM"/>
    <property type="resolution" value="2.73 A"/>
    <property type="chains" value="z=1-275"/>
</dbReference>
<dbReference type="PDB" id="8BQ6">
    <property type="method" value="EM"/>
    <property type="resolution" value="2.80 A"/>
    <property type="chains" value="z=1-275"/>
</dbReference>
<dbReference type="PDBsum" id="7A23"/>
<dbReference type="PDBsum" id="7A24"/>
<dbReference type="PDBsum" id="7AQQ"/>
<dbReference type="PDBsum" id="7AR7"/>
<dbReference type="PDBsum" id="7AR8"/>
<dbReference type="PDBsum" id="7ARB"/>
<dbReference type="PDBsum" id="8BEF"/>
<dbReference type="PDBsum" id="8BPX"/>
<dbReference type="PDBsum" id="8BQ5"/>
<dbReference type="PDBsum" id="8BQ6"/>
<dbReference type="EMDB" id="EMD-11614"/>
<dbReference type="EMDB" id="EMD-11615"/>
<dbReference type="EMDB" id="EMD-11872"/>
<dbReference type="EMDB" id="EMD-11878"/>
<dbReference type="EMDB" id="EMD-16000"/>
<dbReference type="EMDB" id="EMD-16168"/>
<dbReference type="EMDB" id="EMD-16171"/>
<dbReference type="EMDB" id="EMD-16172"/>
<dbReference type="SMR" id="Q9FWR5"/>
<dbReference type="BioGRID" id="23784">
    <property type="interactions" value="27"/>
</dbReference>
<dbReference type="FunCoup" id="Q9FWR5">
    <property type="interactions" value="1246"/>
</dbReference>
<dbReference type="IntAct" id="Q9FWR5">
    <property type="interactions" value="2"/>
</dbReference>
<dbReference type="STRING" id="3702.Q9FWR5"/>
<dbReference type="PaxDb" id="3702-AT1G19580.1"/>
<dbReference type="ProteomicsDB" id="222170">
    <molecule id="Q9FWR5-1"/>
</dbReference>
<dbReference type="EnsemblPlants" id="AT1G19580.1">
    <molecule id="Q9FWR5-1"/>
    <property type="protein sequence ID" value="AT1G19580.1"/>
    <property type="gene ID" value="AT1G19580"/>
</dbReference>
<dbReference type="Gramene" id="AT1G19580.1">
    <molecule id="Q9FWR5-1"/>
    <property type="protein sequence ID" value="AT1G19580.1"/>
    <property type="gene ID" value="AT1G19580"/>
</dbReference>
<dbReference type="KEGG" id="ath:AT1G19580"/>
<dbReference type="Araport" id="AT1G19580"/>
<dbReference type="TAIR" id="AT1G19580">
    <property type="gene designation" value="GAMMA CA1"/>
</dbReference>
<dbReference type="eggNOG" id="ENOG502QTES">
    <property type="taxonomic scope" value="Eukaryota"/>
</dbReference>
<dbReference type="HOGENOM" id="CLU_064827_0_0_1"/>
<dbReference type="InParanoid" id="Q9FWR5"/>
<dbReference type="OMA" id="ACTLEDE"/>
<dbReference type="OrthoDB" id="25818at2759"/>
<dbReference type="PhylomeDB" id="Q9FWR5"/>
<dbReference type="BioCyc" id="ARA:AT1G19580-MONOMER"/>
<dbReference type="BRENDA" id="4.2.1.1">
    <property type="organism ID" value="399"/>
</dbReference>
<dbReference type="PRO" id="PR:Q9FWR5"/>
<dbReference type="Proteomes" id="UP000006548">
    <property type="component" value="Chromosome 1"/>
</dbReference>
<dbReference type="ExpressionAtlas" id="Q9FWR5">
    <property type="expression patterns" value="baseline and differential"/>
</dbReference>
<dbReference type="GO" id="GO:0031966">
    <property type="term" value="C:mitochondrial membrane"/>
    <property type="evidence" value="ECO:0000314"/>
    <property type="project" value="TAIR"/>
</dbReference>
<dbReference type="GO" id="GO:0005739">
    <property type="term" value="C:mitochondrion"/>
    <property type="evidence" value="ECO:0000314"/>
    <property type="project" value="TAIR"/>
</dbReference>
<dbReference type="GO" id="GO:0005634">
    <property type="term" value="C:nucleus"/>
    <property type="evidence" value="ECO:0007005"/>
    <property type="project" value="TAIR"/>
</dbReference>
<dbReference type="GO" id="GO:0045271">
    <property type="term" value="C:respiratory chain complex I"/>
    <property type="evidence" value="ECO:0000314"/>
    <property type="project" value="TAIR"/>
</dbReference>
<dbReference type="GO" id="GO:0004089">
    <property type="term" value="F:carbonate dehydratase activity"/>
    <property type="evidence" value="ECO:0000250"/>
    <property type="project" value="TAIR"/>
</dbReference>
<dbReference type="GO" id="GO:0046872">
    <property type="term" value="F:metal ion binding"/>
    <property type="evidence" value="ECO:0007669"/>
    <property type="project" value="UniProtKB-KW"/>
</dbReference>
<dbReference type="GO" id="GO:0009853">
    <property type="term" value="P:photorespiration"/>
    <property type="evidence" value="ECO:0000304"/>
    <property type="project" value="TAIR"/>
</dbReference>
<dbReference type="GO" id="GO:0070207">
    <property type="term" value="P:protein homotrimerization"/>
    <property type="evidence" value="ECO:0000250"/>
    <property type="project" value="UniProtKB"/>
</dbReference>
<dbReference type="CDD" id="cd04645">
    <property type="entry name" value="LbH_gamma_CA_like"/>
    <property type="match status" value="1"/>
</dbReference>
<dbReference type="FunFam" id="2.160.10.10:FF:000012">
    <property type="entry name" value="Carnitine operon protein CaiE"/>
    <property type="match status" value="1"/>
</dbReference>
<dbReference type="Gene3D" id="2.160.10.10">
    <property type="entry name" value="Hexapeptide repeat proteins"/>
    <property type="match status" value="1"/>
</dbReference>
<dbReference type="InterPro" id="IPR047324">
    <property type="entry name" value="LbH_gamma_CA-like"/>
</dbReference>
<dbReference type="InterPro" id="IPR050484">
    <property type="entry name" value="Transf_Hexapept/Carb_Anhydrase"/>
</dbReference>
<dbReference type="InterPro" id="IPR011004">
    <property type="entry name" value="Trimer_LpxA-like_sf"/>
</dbReference>
<dbReference type="PANTHER" id="PTHR13061">
    <property type="entry name" value="DYNACTIN SUBUNIT P25"/>
    <property type="match status" value="1"/>
</dbReference>
<dbReference type="PANTHER" id="PTHR13061:SF50">
    <property type="entry name" value="GAMMA CARBONIC ANHYDRASE 1, MITOCHONDRIAL"/>
    <property type="match status" value="1"/>
</dbReference>
<dbReference type="SUPFAM" id="SSF51161">
    <property type="entry name" value="Trimeric LpxA-like enzymes"/>
    <property type="match status" value="1"/>
</dbReference>
<accession>Q9FWR5</accession>
<accession>Q67XH5</accession>
<accession>Q682H9</accession>
<accession>Q8LF67</accession>
<accession>Q9LN36</accession>
<keyword id="KW-0002">3D-structure</keyword>
<keyword id="KW-0025">Alternative splicing</keyword>
<keyword id="KW-0456">Lyase</keyword>
<keyword id="KW-0472">Membrane</keyword>
<keyword id="KW-0479">Metal-binding</keyword>
<keyword id="KW-0496">Mitochondrion</keyword>
<keyword id="KW-1185">Reference proteome</keyword>
<keyword id="KW-0809">Transit peptide</keyword>
<keyword id="KW-0862">Zinc</keyword>